<protein>
    <recommendedName>
        <fullName>Corticotropin-releasing factor receptor 1</fullName>
        <shortName>CRF-R-1</shortName>
        <shortName>CRF-R1</shortName>
        <shortName>CRFR-1</shortName>
    </recommendedName>
</protein>
<feature type="signal peptide" evidence="3">
    <location>
        <begin position="1"/>
        <end position="23"/>
    </location>
</feature>
<feature type="chain" id="PRO_0000240656" description="Corticotropin-releasing factor receptor 1">
    <location>
        <begin position="24"/>
        <end position="415"/>
    </location>
</feature>
<feature type="topological domain" description="Extracellular" evidence="1">
    <location>
        <begin position="24"/>
        <end position="111"/>
    </location>
</feature>
<feature type="transmembrane region" description="Helical; Name=1" evidence="1">
    <location>
        <begin position="112"/>
        <end position="142"/>
    </location>
</feature>
<feature type="topological domain" description="Cytoplasmic" evidence="1">
    <location>
        <begin position="143"/>
        <end position="149"/>
    </location>
</feature>
<feature type="transmembrane region" description="Helical; Name=2" evidence="1">
    <location>
        <begin position="150"/>
        <end position="174"/>
    </location>
</feature>
<feature type="topological domain" description="Extracellular" evidence="1">
    <location>
        <begin position="175"/>
        <end position="189"/>
    </location>
</feature>
<feature type="transmembrane region" description="Helical; Name=3" evidence="1">
    <location>
        <begin position="190"/>
        <end position="218"/>
    </location>
</feature>
<feature type="topological domain" description="Cytoplasmic" evidence="1">
    <location>
        <begin position="219"/>
        <end position="225"/>
    </location>
</feature>
<feature type="transmembrane region" description="Helical; Name=4" evidence="1">
    <location>
        <begin position="226"/>
        <end position="253"/>
    </location>
</feature>
<feature type="topological domain" description="Extracellular" evidence="1">
    <location>
        <begin position="254"/>
        <end position="269"/>
    </location>
</feature>
<feature type="transmembrane region" description="Helical; Name=5" evidence="1">
    <location>
        <begin position="270"/>
        <end position="295"/>
    </location>
</feature>
<feature type="topological domain" description="Cytoplasmic" evidence="1">
    <location>
        <begin position="296"/>
        <end position="306"/>
    </location>
</feature>
<feature type="transmembrane region" description="Helical; Name=6" evidence="1">
    <location>
        <begin position="307"/>
        <end position="331"/>
    </location>
</feature>
<feature type="topological domain" description="Extracellular" evidence="1">
    <location>
        <begin position="332"/>
        <end position="338"/>
    </location>
</feature>
<feature type="transmembrane region" description="Helical; Name=7" evidence="1">
    <location>
        <begin position="339"/>
        <end position="368"/>
    </location>
</feature>
<feature type="topological domain" description="Cytoplasmic" evidence="1">
    <location>
        <begin position="369"/>
        <end position="415"/>
    </location>
</feature>
<feature type="region of interest" description="Important for peptide agonist binding" evidence="1">
    <location>
        <begin position="99"/>
        <end position="108"/>
    </location>
</feature>
<feature type="region of interest" description="Important for antagonist binding" evidence="1">
    <location>
        <begin position="280"/>
        <end position="290"/>
    </location>
</feature>
<feature type="modified residue" description="Phosphoserine; by PKA" evidence="2">
    <location>
        <position position="301"/>
    </location>
</feature>
<feature type="glycosylation site" description="N-linked (GlcNAc...) asparagine" evidence="3">
    <location>
        <position position="38"/>
    </location>
</feature>
<feature type="glycosylation site" description="N-linked (GlcNAc...) asparagine" evidence="3">
    <location>
        <position position="78"/>
    </location>
</feature>
<feature type="glycosylation site" description="N-linked (GlcNAc...) asparagine" evidence="3">
    <location>
        <position position="98"/>
    </location>
</feature>
<feature type="disulfide bond" evidence="1">
    <location>
        <begin position="30"/>
        <end position="54"/>
    </location>
</feature>
<feature type="disulfide bond" evidence="1">
    <location>
        <begin position="44"/>
        <end position="87"/>
    </location>
</feature>
<feature type="disulfide bond" evidence="1">
    <location>
        <begin position="68"/>
        <end position="102"/>
    </location>
</feature>
<feature type="disulfide bond" evidence="1">
    <location>
        <begin position="188"/>
        <end position="258"/>
    </location>
</feature>
<sequence>MARHPQLRLVKALLLLGLNPVSASLQDQHCESLSLASNISGLQCNASVDLIGTCWPRSPAGQLVVRPCPAFFYGVRYNTTNNGYRECLANGSWAARVNYSECQEILNEEKKSKVHYHVAVIINYLGHCISLVALLVAFVLFLRLRSIRCLRNIIHWNLISAFILRNATWFVVQLTMSPEVHQSNVGWCRLVTAAYNYFHVTNFFWMFGEGCYLHTAIVLTYSTDRLRKWMFICIGWGVPFPIIVAWAIGKLYYDNEKCWFGKRPGVYTDYIYQGPMILVLLINFIFLFNIVRILMTKLRASTTSETIQYRKAVKATLVLLPLLGITYMLFFVNPGEDEVSRVVFIYFNSFLESFQGFFVSVFYCFLNSEVRSAIRKRWHRWQDKHSIRARVARAMSIPTSPTRVSFHSIKQSTAV</sequence>
<reference key="1">
    <citation type="journal article" date="2004" name="Life Sci.">
        <title>Monkey corticotropin-releasing factor1 receptor: complementary DNA cloning and pharmacological characterization.</title>
        <authorList>
            <person name="Oshida Y."/>
            <person name="Ikeda Y."/>
            <person name="Chaki S."/>
            <person name="Okuyama S."/>
        </authorList>
    </citation>
    <scope>NUCLEOTIDE SEQUENCE [MRNA]</scope>
    <scope>FUNCTION</scope>
    <scope>SUBCELLULAR LOCATION</scope>
    <scope>TISSUE SPECIFICITY</scope>
</reference>
<comment type="function">
    <text evidence="4">G-protein coupled receptor for CRH (corticotropin-releasing factor) and UCN (urocortin). Has high affinity for CRH and UCN. Ligand binding causes a conformation change that triggers signaling via guanine nucleotide-binding proteins (G proteins) and down-stream effectors, such as adenylate cyclase. Promotes the activation of adenylate cyclase, leading to increased intracellular cAMP levels. Inhibits the activity of the calcium channel CACNA1H. Required for normal embryonic development of the adrenal gland and for normal hormonal responses to stress. Plays a role in the response to anxiogenic stimuli.</text>
</comment>
<comment type="subunit">
    <text evidence="1">Heterodimer; heterodimerizes with GPER1. Interacts (via N-terminal extracellular domain) with CRH and UCN. Interacts with DLG1; this inhibits endocytosis of CRHR1 after agonist binding (By similarity).</text>
</comment>
<comment type="subcellular location">
    <subcellularLocation>
        <location evidence="4">Cell membrane</location>
        <topology evidence="4">Multi-pass membrane protein</topology>
    </subcellularLocation>
    <subcellularLocation>
        <location evidence="1">Endosome</location>
    </subcellularLocation>
    <text evidence="1">Agonist-binding promotes endocytosis.</text>
</comment>
<comment type="tissue specificity">
    <text evidence="4">Expressed abundantly in the pituitary, cerebral cortex, hippocampus, amygdala and cerebellum.</text>
</comment>
<comment type="domain">
    <text evidence="1">The transmembrane domain is composed of seven transmembrane helices that are arranged in V-shape. Transmembrane helix 7 assumes a sharply kinked structure (By similarity).</text>
</comment>
<comment type="PTM">
    <text evidence="1">C-terminal Ser or Thr residues may be phosphorylated.</text>
</comment>
<comment type="PTM">
    <text evidence="1">Phosphorylation at Ser-301 by PKA prevents maximal coupling to Gq-protein, and thereby negatively regulates downstream signaling.</text>
</comment>
<comment type="similarity">
    <text evidence="5">Belongs to the G-protein coupled receptor 2 family.</text>
</comment>
<organism>
    <name type="scientific">Macaca mulatta</name>
    <name type="common">Rhesus macaque</name>
    <dbReference type="NCBI Taxonomy" id="9544"/>
    <lineage>
        <taxon>Eukaryota</taxon>
        <taxon>Metazoa</taxon>
        <taxon>Chordata</taxon>
        <taxon>Craniata</taxon>
        <taxon>Vertebrata</taxon>
        <taxon>Euteleostomi</taxon>
        <taxon>Mammalia</taxon>
        <taxon>Eutheria</taxon>
        <taxon>Euarchontoglires</taxon>
        <taxon>Primates</taxon>
        <taxon>Haplorrhini</taxon>
        <taxon>Catarrhini</taxon>
        <taxon>Cercopithecidae</taxon>
        <taxon>Cercopithecinae</taxon>
        <taxon>Macaca</taxon>
    </lineage>
</organism>
<name>CRFR1_MACMU</name>
<accession>Q76LL8</accession>
<evidence type="ECO:0000250" key="1"/>
<evidence type="ECO:0000250" key="2">
    <source>
        <dbReference type="UniProtKB" id="P34998"/>
    </source>
</evidence>
<evidence type="ECO:0000255" key="3"/>
<evidence type="ECO:0000269" key="4">
    <source>
    </source>
</evidence>
<evidence type="ECO:0000305" key="5"/>
<keyword id="KW-1003">Cell membrane</keyword>
<keyword id="KW-1015">Disulfide bond</keyword>
<keyword id="KW-0967">Endosome</keyword>
<keyword id="KW-0297">G-protein coupled receptor</keyword>
<keyword id="KW-0325">Glycoprotein</keyword>
<keyword id="KW-0472">Membrane</keyword>
<keyword id="KW-0597">Phosphoprotein</keyword>
<keyword id="KW-0675">Receptor</keyword>
<keyword id="KW-1185">Reference proteome</keyword>
<keyword id="KW-0732">Signal</keyword>
<keyword id="KW-0807">Transducer</keyword>
<keyword id="KW-0812">Transmembrane</keyword>
<keyword id="KW-1133">Transmembrane helix</keyword>
<gene>
    <name type="primary">CRHR1</name>
    <name type="synonym">CRF1</name>
</gene>
<dbReference type="EMBL" id="AB078141">
    <property type="protein sequence ID" value="BAD02831.1"/>
    <property type="molecule type" value="mRNA"/>
</dbReference>
<dbReference type="RefSeq" id="NP_001027975.1">
    <property type="nucleotide sequence ID" value="NM_001032803.1"/>
</dbReference>
<dbReference type="SMR" id="Q76LL8"/>
<dbReference type="STRING" id="9544.ENSMMUP00000055825"/>
<dbReference type="BindingDB" id="Q76LL8"/>
<dbReference type="GlyCosmos" id="Q76LL8">
    <property type="glycosylation" value="3 sites, No reported glycans"/>
</dbReference>
<dbReference type="PaxDb" id="9544-ENSMMUP00000005491"/>
<dbReference type="GeneID" id="574095"/>
<dbReference type="KEGG" id="mcc:574095"/>
<dbReference type="CTD" id="1394"/>
<dbReference type="eggNOG" id="KOG4564">
    <property type="taxonomic scope" value="Eukaryota"/>
</dbReference>
<dbReference type="InParanoid" id="Q76LL8"/>
<dbReference type="OrthoDB" id="6022368at2759"/>
<dbReference type="Proteomes" id="UP000006718">
    <property type="component" value="Unassembled WGS sequence"/>
</dbReference>
<dbReference type="GO" id="GO:0005768">
    <property type="term" value="C:endosome"/>
    <property type="evidence" value="ECO:0007669"/>
    <property type="project" value="UniProtKB-SubCell"/>
</dbReference>
<dbReference type="GO" id="GO:0043005">
    <property type="term" value="C:neuron projection"/>
    <property type="evidence" value="ECO:0000318"/>
    <property type="project" value="GO_Central"/>
</dbReference>
<dbReference type="GO" id="GO:0005886">
    <property type="term" value="C:plasma membrane"/>
    <property type="evidence" value="ECO:0000250"/>
    <property type="project" value="UniProtKB"/>
</dbReference>
<dbReference type="GO" id="GO:0015056">
    <property type="term" value="F:corticotrophin-releasing factor receptor activity"/>
    <property type="evidence" value="ECO:0000250"/>
    <property type="project" value="UniProtKB"/>
</dbReference>
<dbReference type="GO" id="GO:0051424">
    <property type="term" value="F:corticotropin-releasing hormone binding"/>
    <property type="evidence" value="ECO:0000318"/>
    <property type="project" value="GO_Central"/>
</dbReference>
<dbReference type="GO" id="GO:0043404">
    <property type="term" value="F:corticotropin-releasing hormone receptor activity"/>
    <property type="evidence" value="ECO:0000318"/>
    <property type="project" value="GO_Central"/>
</dbReference>
<dbReference type="GO" id="GO:0008528">
    <property type="term" value="F:G protein-coupled peptide receptor activity"/>
    <property type="evidence" value="ECO:0000318"/>
    <property type="project" value="GO_Central"/>
</dbReference>
<dbReference type="GO" id="GO:0007189">
    <property type="term" value="P:adenylate cyclase-activating G protein-coupled receptor signaling pathway"/>
    <property type="evidence" value="ECO:0000250"/>
    <property type="project" value="UniProtKB"/>
</dbReference>
<dbReference type="GO" id="GO:0007166">
    <property type="term" value="P:cell surface receptor signaling pathway"/>
    <property type="evidence" value="ECO:0007669"/>
    <property type="project" value="InterPro"/>
</dbReference>
<dbReference type="GO" id="GO:0071376">
    <property type="term" value="P:cellular response to corticotropin-releasing hormone stimulus"/>
    <property type="evidence" value="ECO:0000250"/>
    <property type="project" value="UniProtKB"/>
</dbReference>
<dbReference type="GO" id="GO:0051458">
    <property type="term" value="P:corticotropin secretion"/>
    <property type="evidence" value="ECO:0000250"/>
    <property type="project" value="UniProtKB"/>
</dbReference>
<dbReference type="GO" id="GO:2000852">
    <property type="term" value="P:regulation of corticosterone secretion"/>
    <property type="evidence" value="ECO:0000250"/>
    <property type="project" value="UniProtKB"/>
</dbReference>
<dbReference type="CDD" id="cd15445">
    <property type="entry name" value="7tmB1_CRF-R1"/>
    <property type="match status" value="1"/>
</dbReference>
<dbReference type="FunFam" id="1.20.1070.10:FF:000021">
    <property type="entry name" value="Corticotropin releasing factor receptor 2"/>
    <property type="match status" value="1"/>
</dbReference>
<dbReference type="FunFam" id="4.10.1240.10:FF:000007">
    <property type="entry name" value="Corticotropin-releasing factor receptor 1"/>
    <property type="match status" value="1"/>
</dbReference>
<dbReference type="Gene3D" id="4.10.1240.10">
    <property type="entry name" value="GPCR, family 2, extracellular hormone receptor domain"/>
    <property type="match status" value="1"/>
</dbReference>
<dbReference type="Gene3D" id="1.20.1070.10">
    <property type="entry name" value="Rhodopsin 7-helix transmembrane proteins"/>
    <property type="match status" value="1"/>
</dbReference>
<dbReference type="InterPro" id="IPR050332">
    <property type="entry name" value="GPCR_2"/>
</dbReference>
<dbReference type="InterPro" id="IPR017981">
    <property type="entry name" value="GPCR_2-like_7TM"/>
</dbReference>
<dbReference type="InterPro" id="IPR003052">
    <property type="entry name" value="GPCR_2_CRF1_rcpt"/>
</dbReference>
<dbReference type="InterPro" id="IPR003051">
    <property type="entry name" value="GPCR_2_CRF_rcpt"/>
</dbReference>
<dbReference type="InterPro" id="IPR036445">
    <property type="entry name" value="GPCR_2_extracell_dom_sf"/>
</dbReference>
<dbReference type="InterPro" id="IPR001879">
    <property type="entry name" value="GPCR_2_extracellular_dom"/>
</dbReference>
<dbReference type="InterPro" id="IPR000832">
    <property type="entry name" value="GPCR_2_secretin-like"/>
</dbReference>
<dbReference type="InterPro" id="IPR017983">
    <property type="entry name" value="GPCR_2_secretin-like_CS"/>
</dbReference>
<dbReference type="PANTHER" id="PTHR45620:SF2">
    <property type="entry name" value="CORTICOTROPIN-RELEASING FACTOR RECEPTOR 1"/>
    <property type="match status" value="1"/>
</dbReference>
<dbReference type="PANTHER" id="PTHR45620">
    <property type="entry name" value="PDF RECEPTOR-LIKE PROTEIN-RELATED"/>
    <property type="match status" value="1"/>
</dbReference>
<dbReference type="Pfam" id="PF00002">
    <property type="entry name" value="7tm_2"/>
    <property type="match status" value="1"/>
</dbReference>
<dbReference type="Pfam" id="PF02793">
    <property type="entry name" value="HRM"/>
    <property type="match status" value="1"/>
</dbReference>
<dbReference type="PRINTS" id="PR01279">
    <property type="entry name" value="CRFRECEPTOR"/>
</dbReference>
<dbReference type="PRINTS" id="PR01280">
    <property type="entry name" value="CRFRECEPTOR1"/>
</dbReference>
<dbReference type="PRINTS" id="PR00249">
    <property type="entry name" value="GPCRSECRETIN"/>
</dbReference>
<dbReference type="SMART" id="SM00008">
    <property type="entry name" value="HormR"/>
    <property type="match status" value="1"/>
</dbReference>
<dbReference type="SUPFAM" id="SSF81321">
    <property type="entry name" value="Family A G protein-coupled receptor-like"/>
    <property type="match status" value="1"/>
</dbReference>
<dbReference type="SUPFAM" id="SSF111418">
    <property type="entry name" value="Hormone receptor domain"/>
    <property type="match status" value="1"/>
</dbReference>
<dbReference type="PROSITE" id="PS00649">
    <property type="entry name" value="G_PROTEIN_RECEP_F2_1"/>
    <property type="match status" value="1"/>
</dbReference>
<dbReference type="PROSITE" id="PS00650">
    <property type="entry name" value="G_PROTEIN_RECEP_F2_2"/>
    <property type="match status" value="1"/>
</dbReference>
<dbReference type="PROSITE" id="PS50227">
    <property type="entry name" value="G_PROTEIN_RECEP_F2_3"/>
    <property type="match status" value="1"/>
</dbReference>
<dbReference type="PROSITE" id="PS50261">
    <property type="entry name" value="G_PROTEIN_RECEP_F2_4"/>
    <property type="match status" value="1"/>
</dbReference>
<proteinExistence type="evidence at transcript level"/>